<comment type="function">
    <text evidence="1">NDH-1 shuttles electrons from an unknown electron donor, via FMN and iron-sulfur (Fe-S) centers, to quinones in the respiratory and/or the photosynthetic chain. The immediate electron acceptor for the enzyme in this species is believed to be plastoquinone. Couples the redox reaction to proton translocation, and thus conserves the redox energy in a proton gradient. Cyanobacterial NDH-1 also plays a role in inorganic carbon-concentration.</text>
</comment>
<comment type="catalytic activity">
    <reaction evidence="1">
        <text>a plastoquinone + NADH + (n+1) H(+)(in) = a plastoquinol + NAD(+) + n H(+)(out)</text>
        <dbReference type="Rhea" id="RHEA:42608"/>
        <dbReference type="Rhea" id="RHEA-COMP:9561"/>
        <dbReference type="Rhea" id="RHEA-COMP:9562"/>
        <dbReference type="ChEBI" id="CHEBI:15378"/>
        <dbReference type="ChEBI" id="CHEBI:17757"/>
        <dbReference type="ChEBI" id="CHEBI:57540"/>
        <dbReference type="ChEBI" id="CHEBI:57945"/>
        <dbReference type="ChEBI" id="CHEBI:62192"/>
    </reaction>
</comment>
<comment type="catalytic activity">
    <reaction evidence="1">
        <text>a plastoquinone + NADPH + (n+1) H(+)(in) = a plastoquinol + NADP(+) + n H(+)(out)</text>
        <dbReference type="Rhea" id="RHEA:42612"/>
        <dbReference type="Rhea" id="RHEA-COMP:9561"/>
        <dbReference type="Rhea" id="RHEA-COMP:9562"/>
        <dbReference type="ChEBI" id="CHEBI:15378"/>
        <dbReference type="ChEBI" id="CHEBI:17757"/>
        <dbReference type="ChEBI" id="CHEBI:57783"/>
        <dbReference type="ChEBI" id="CHEBI:58349"/>
        <dbReference type="ChEBI" id="CHEBI:62192"/>
    </reaction>
</comment>
<comment type="subunit">
    <text evidence="1">NDH-1 can be composed of about 15 different subunits; different subcomplexes with different compositions have been identified which probably have different functions.</text>
</comment>
<comment type="subcellular location">
    <subcellularLocation>
        <location evidence="1">Cellular thylakoid membrane</location>
        <topology evidence="1">Peripheral membrane protein</topology>
        <orientation evidence="1">Cytoplasmic side</orientation>
    </subcellularLocation>
</comment>
<comment type="similarity">
    <text evidence="1">Belongs to the complex I NdhM subunit family.</text>
</comment>
<protein>
    <recommendedName>
        <fullName evidence="1">NAD(P)H-quinone oxidoreductase subunit M</fullName>
        <ecNumber evidence="1">7.1.1.-</ecNumber>
    </recommendedName>
    <alternativeName>
        <fullName evidence="1">NAD(P)H dehydrogenase I subunit M</fullName>
        <shortName evidence="1">NDH-1 subunit M</shortName>
        <shortName evidence="1">NDH-M</shortName>
    </alternativeName>
</protein>
<keyword id="KW-0472">Membrane</keyword>
<keyword id="KW-0520">NAD</keyword>
<keyword id="KW-0521">NADP</keyword>
<keyword id="KW-0618">Plastoquinone</keyword>
<keyword id="KW-0874">Quinone</keyword>
<keyword id="KW-1185">Reference proteome</keyword>
<keyword id="KW-0793">Thylakoid</keyword>
<keyword id="KW-1278">Translocase</keyword>
<keyword id="KW-0813">Transport</keyword>
<evidence type="ECO:0000255" key="1">
    <source>
        <dbReference type="HAMAP-Rule" id="MF_01352"/>
    </source>
</evidence>
<sequence length="114" mass="13048">MLLKSTTRHIHIYTAEVENNELIPSESVLTLDVDPDNELVWSEDALQRVYAKFDELVETYSGEDLTDYNLRRIGSDLEHYVRSLLQKGIVGYNLSSRVRNFSMGLPQVIASESK</sequence>
<gene>
    <name evidence="1" type="primary">ndhM</name>
    <name type="ordered locus">AM1_6407</name>
</gene>
<name>NDHM_ACAM1</name>
<accession>B0C8S5</accession>
<reference key="1">
    <citation type="journal article" date="2008" name="Proc. Natl. Acad. Sci. U.S.A.">
        <title>Niche adaptation and genome expansion in the chlorophyll d-producing cyanobacterium Acaryochloris marina.</title>
        <authorList>
            <person name="Swingley W.D."/>
            <person name="Chen M."/>
            <person name="Cheung P.C."/>
            <person name="Conrad A.L."/>
            <person name="Dejesa L.C."/>
            <person name="Hao J."/>
            <person name="Honchak B.M."/>
            <person name="Karbach L.E."/>
            <person name="Kurdoglu A."/>
            <person name="Lahiri S."/>
            <person name="Mastrian S.D."/>
            <person name="Miyashita H."/>
            <person name="Page L."/>
            <person name="Ramakrishna P."/>
            <person name="Satoh S."/>
            <person name="Sattley W.M."/>
            <person name="Shimada Y."/>
            <person name="Taylor H.L."/>
            <person name="Tomo T."/>
            <person name="Tsuchiya T."/>
            <person name="Wang Z.T."/>
            <person name="Raymond J."/>
            <person name="Mimuro M."/>
            <person name="Blankenship R.E."/>
            <person name="Touchman J.W."/>
        </authorList>
    </citation>
    <scope>NUCLEOTIDE SEQUENCE [LARGE SCALE GENOMIC DNA]</scope>
    <source>
        <strain>MBIC 11017</strain>
    </source>
</reference>
<feature type="chain" id="PRO_0000352178" description="NAD(P)H-quinone oxidoreductase subunit M">
    <location>
        <begin position="1"/>
        <end position="114"/>
    </location>
</feature>
<proteinExistence type="inferred from homology"/>
<organism>
    <name type="scientific">Acaryochloris marina (strain MBIC 11017)</name>
    <dbReference type="NCBI Taxonomy" id="329726"/>
    <lineage>
        <taxon>Bacteria</taxon>
        <taxon>Bacillati</taxon>
        <taxon>Cyanobacteriota</taxon>
        <taxon>Cyanophyceae</taxon>
        <taxon>Acaryochloridales</taxon>
        <taxon>Acaryochloridaceae</taxon>
        <taxon>Acaryochloris</taxon>
    </lineage>
</organism>
<dbReference type="EC" id="7.1.1.-" evidence="1"/>
<dbReference type="EMBL" id="CP000828">
    <property type="protein sequence ID" value="ABW31337.1"/>
    <property type="molecule type" value="Genomic_DNA"/>
</dbReference>
<dbReference type="RefSeq" id="WP_012166511.1">
    <property type="nucleotide sequence ID" value="NC_009925.1"/>
</dbReference>
<dbReference type="SMR" id="B0C8S5"/>
<dbReference type="STRING" id="329726.AM1_6407"/>
<dbReference type="KEGG" id="amr:AM1_6407"/>
<dbReference type="eggNOG" id="ENOG5031AQM">
    <property type="taxonomic scope" value="Bacteria"/>
</dbReference>
<dbReference type="HOGENOM" id="CLU_137431_0_0_3"/>
<dbReference type="OrthoDB" id="461686at2"/>
<dbReference type="Proteomes" id="UP000000268">
    <property type="component" value="Chromosome"/>
</dbReference>
<dbReference type="GO" id="GO:0031676">
    <property type="term" value="C:plasma membrane-derived thylakoid membrane"/>
    <property type="evidence" value="ECO:0007669"/>
    <property type="project" value="UniProtKB-SubCell"/>
</dbReference>
<dbReference type="GO" id="GO:0016655">
    <property type="term" value="F:oxidoreductase activity, acting on NAD(P)H, quinone or similar compound as acceptor"/>
    <property type="evidence" value="ECO:0007669"/>
    <property type="project" value="UniProtKB-UniRule"/>
</dbReference>
<dbReference type="GO" id="GO:0048038">
    <property type="term" value="F:quinone binding"/>
    <property type="evidence" value="ECO:0007669"/>
    <property type="project" value="UniProtKB-KW"/>
</dbReference>
<dbReference type="HAMAP" id="MF_01352">
    <property type="entry name" value="NDH1_NDH1M"/>
    <property type="match status" value="1"/>
</dbReference>
<dbReference type="InterPro" id="IPR018922">
    <property type="entry name" value="NdhM"/>
</dbReference>
<dbReference type="PANTHER" id="PTHR36900">
    <property type="entry name" value="NAD(P)H-QUINONE OXIDOREDUCTASE SUBUNIT M, CHLOROPLASTIC"/>
    <property type="match status" value="1"/>
</dbReference>
<dbReference type="PANTHER" id="PTHR36900:SF1">
    <property type="entry name" value="NAD(P)H-QUINONE OXIDOREDUCTASE SUBUNIT M, CHLOROPLASTIC"/>
    <property type="match status" value="1"/>
</dbReference>
<dbReference type="Pfam" id="PF10664">
    <property type="entry name" value="NdhM"/>
    <property type="match status" value="1"/>
</dbReference>